<proteinExistence type="evidence at protein level"/>
<feature type="chain" id="PRO_0000247028" description="Cytosolic phospholipase A2 zeta">
    <location>
        <begin position="1"/>
        <end position="855"/>
    </location>
</feature>
<feature type="domain" description="C2" evidence="3">
    <location>
        <begin position="27"/>
        <end position="145"/>
    </location>
</feature>
<feature type="domain" description="PLA2c" evidence="4">
    <location>
        <begin position="304"/>
        <end position="855"/>
    </location>
</feature>
<feature type="active site" description="Nucleophile" evidence="1">
    <location>
        <position position="393"/>
    </location>
</feature>
<feature type="active site" description="Proton acceptor" evidence="1">
    <location>
        <position position="685"/>
    </location>
</feature>
<feature type="binding site" evidence="3">
    <location>
        <position position="60"/>
    </location>
    <ligand>
        <name>Ca(2+)</name>
        <dbReference type="ChEBI" id="CHEBI:29108"/>
        <label>1</label>
    </ligand>
</feature>
<feature type="binding site" evidence="3">
    <location>
        <position position="60"/>
    </location>
    <ligand>
        <name>Ca(2+)</name>
        <dbReference type="ChEBI" id="CHEBI:29108"/>
        <label>2</label>
    </ligand>
</feature>
<feature type="binding site" evidence="3">
    <location>
        <position position="66"/>
    </location>
    <ligand>
        <name>Ca(2+)</name>
        <dbReference type="ChEBI" id="CHEBI:29108"/>
        <label>1</label>
    </ligand>
</feature>
<feature type="binding site" evidence="3">
    <location>
        <position position="116"/>
    </location>
    <ligand>
        <name>Ca(2+)</name>
        <dbReference type="ChEBI" id="CHEBI:29108"/>
        <label>1</label>
    </ligand>
</feature>
<feature type="binding site" evidence="3">
    <location>
        <position position="116"/>
    </location>
    <ligand>
        <name>Ca(2+)</name>
        <dbReference type="ChEBI" id="CHEBI:29108"/>
        <label>2</label>
    </ligand>
</feature>
<feature type="binding site" evidence="3">
    <location>
        <position position="118"/>
    </location>
    <ligand>
        <name>Ca(2+)</name>
        <dbReference type="ChEBI" id="CHEBI:29108"/>
        <label>1</label>
    </ligand>
</feature>
<feature type="binding site" evidence="3">
    <location>
        <position position="118"/>
    </location>
    <ligand>
        <name>Ca(2+)</name>
        <dbReference type="ChEBI" id="CHEBI:29108"/>
        <label>2</label>
    </ligand>
</feature>
<feature type="binding site" evidence="3">
    <location>
        <position position="123"/>
    </location>
    <ligand>
        <name>Ca(2+)</name>
        <dbReference type="ChEBI" id="CHEBI:29108"/>
        <label>2</label>
    </ligand>
</feature>
<feature type="sequence conflict" description="In Ref. 3; AAH39947." evidence="7" ref="3">
    <original>P</original>
    <variation>H</variation>
    <location>
        <position position="99"/>
    </location>
</feature>
<feature type="sequence conflict" description="In Ref. 3; AAH39947." evidence="7" ref="3">
    <original>T</original>
    <variation>M</variation>
    <location>
        <position position="132"/>
    </location>
</feature>
<feature type="sequence conflict" description="In Ref. 3; AAH39947." evidence="7" ref="3">
    <original>V</original>
    <variation>M</variation>
    <location>
        <position position="234"/>
    </location>
</feature>
<feature type="sequence conflict" description="In Ref. 3; AAH39947." evidence="7" ref="3">
    <original>S</original>
    <variation>T</variation>
    <location>
        <position position="297"/>
    </location>
</feature>
<feature type="sequence conflict" description="In Ref. 3; AAH39947/AAH46400." evidence="7" ref="3">
    <original>D</original>
    <variation>Y</variation>
    <location>
        <position position="507"/>
    </location>
</feature>
<feature type="sequence conflict" description="In Ref. 3; AAH39947/AAH46400." evidence="7" ref="3">
    <original>A</original>
    <variation>V</variation>
    <location>
        <position position="526"/>
    </location>
</feature>
<feature type="sequence conflict" description="In Ref. 3; AAH39947/AAH46400." evidence="7" ref="3">
    <original>A</original>
    <variation>T</variation>
    <location>
        <position position="755"/>
    </location>
</feature>
<dbReference type="EC" id="3.1.1.4" evidence="5 6"/>
<dbReference type="EMBL" id="AB195278">
    <property type="protein sequence ID" value="BAD98154.1"/>
    <property type="molecule type" value="mRNA"/>
</dbReference>
<dbReference type="EMBL" id="AL844608">
    <property type="status" value="NOT_ANNOTATED_CDS"/>
    <property type="molecule type" value="Genomic_DNA"/>
</dbReference>
<dbReference type="EMBL" id="BC039947">
    <property type="protein sequence ID" value="AAH39947.1"/>
    <property type="status" value="ALT_INIT"/>
    <property type="molecule type" value="mRNA"/>
</dbReference>
<dbReference type="EMBL" id="BC046400">
    <property type="protein sequence ID" value="AAH46400.1"/>
    <property type="molecule type" value="mRNA"/>
</dbReference>
<dbReference type="CCDS" id="CCDS16618.1"/>
<dbReference type="RefSeq" id="NP_001019316.1">
    <property type="nucleotide sequence ID" value="NM_001024145.3"/>
</dbReference>
<dbReference type="SMR" id="Q50L41"/>
<dbReference type="FunCoup" id="Q50L41">
    <property type="interactions" value="769"/>
</dbReference>
<dbReference type="STRING" id="10090.ENSMUSP00000062607"/>
<dbReference type="SwissLipids" id="SLP:000001085"/>
<dbReference type="PhosphoSitePlus" id="Q50L41"/>
<dbReference type="PaxDb" id="10090-ENSMUSP00000062607"/>
<dbReference type="ProteomicsDB" id="294373"/>
<dbReference type="Antibodypedia" id="42117">
    <property type="antibodies" value="68 antibodies from 24 providers"/>
</dbReference>
<dbReference type="DNASU" id="271844"/>
<dbReference type="Ensembl" id="ENSMUST00000054651.8">
    <property type="protein sequence ID" value="ENSMUSP00000062607.8"/>
    <property type="gene ID" value="ENSMUSG00000046971.8"/>
</dbReference>
<dbReference type="GeneID" id="271844"/>
<dbReference type="KEGG" id="mmu:271844"/>
<dbReference type="UCSC" id="uc008lvi.2">
    <property type="organism name" value="mouse"/>
</dbReference>
<dbReference type="AGR" id="MGI:2685493"/>
<dbReference type="CTD" id="255189"/>
<dbReference type="MGI" id="MGI:2685493">
    <property type="gene designation" value="Pla2g4f"/>
</dbReference>
<dbReference type="VEuPathDB" id="HostDB:ENSMUSG00000046971"/>
<dbReference type="eggNOG" id="KOG1028">
    <property type="taxonomic scope" value="Eukaryota"/>
</dbReference>
<dbReference type="eggNOG" id="KOG1325">
    <property type="taxonomic scope" value="Eukaryota"/>
</dbReference>
<dbReference type="GeneTree" id="ENSGT01030000234606"/>
<dbReference type="HOGENOM" id="CLU_011663_0_0_1"/>
<dbReference type="InParanoid" id="Q50L41"/>
<dbReference type="OMA" id="PMRLKTR"/>
<dbReference type="OrthoDB" id="419768at2759"/>
<dbReference type="PhylomeDB" id="Q50L41"/>
<dbReference type="TreeFam" id="TF325228"/>
<dbReference type="Reactome" id="R-MMU-1482788">
    <property type="pathway name" value="Acyl chain remodelling of PC"/>
</dbReference>
<dbReference type="Reactome" id="R-MMU-1482801">
    <property type="pathway name" value="Acyl chain remodelling of PS"/>
</dbReference>
<dbReference type="Reactome" id="R-MMU-1482839">
    <property type="pathway name" value="Acyl chain remodelling of PE"/>
</dbReference>
<dbReference type="Reactome" id="R-MMU-1482922">
    <property type="pathway name" value="Acyl chain remodelling of PI"/>
</dbReference>
<dbReference type="Reactome" id="R-MMU-1482925">
    <property type="pathway name" value="Acyl chain remodelling of PG"/>
</dbReference>
<dbReference type="Reactome" id="R-MMU-1483115">
    <property type="pathway name" value="Hydrolysis of LPC"/>
</dbReference>
<dbReference type="BioGRID-ORCS" id="271844">
    <property type="hits" value="3 hits in 79 CRISPR screens"/>
</dbReference>
<dbReference type="PRO" id="PR:Q50L41"/>
<dbReference type="Proteomes" id="UP000000589">
    <property type="component" value="Chromosome 2"/>
</dbReference>
<dbReference type="RNAct" id="Q50L41">
    <property type="molecule type" value="protein"/>
</dbReference>
<dbReference type="Bgee" id="ENSMUSG00000046971">
    <property type="expression patterns" value="Expressed in esophagus and 70 other cell types or tissues"/>
</dbReference>
<dbReference type="GO" id="GO:0005737">
    <property type="term" value="C:cytoplasm"/>
    <property type="evidence" value="ECO:0000314"/>
    <property type="project" value="MGI"/>
</dbReference>
<dbReference type="GO" id="GO:0005829">
    <property type="term" value="C:cytosol"/>
    <property type="evidence" value="ECO:0000314"/>
    <property type="project" value="MGI"/>
</dbReference>
<dbReference type="GO" id="GO:0005739">
    <property type="term" value="C:mitochondrion"/>
    <property type="evidence" value="ECO:0007669"/>
    <property type="project" value="UniProtKB-SubCell"/>
</dbReference>
<dbReference type="GO" id="GO:0032587">
    <property type="term" value="C:ruffle membrane"/>
    <property type="evidence" value="ECO:0000314"/>
    <property type="project" value="MGI"/>
</dbReference>
<dbReference type="GO" id="GO:0031982">
    <property type="term" value="C:vesicle"/>
    <property type="evidence" value="ECO:0000314"/>
    <property type="project" value="MGI"/>
</dbReference>
<dbReference type="GO" id="GO:0005509">
    <property type="term" value="F:calcium ion binding"/>
    <property type="evidence" value="ECO:0007669"/>
    <property type="project" value="InterPro"/>
</dbReference>
<dbReference type="GO" id="GO:0047498">
    <property type="term" value="F:calcium-dependent phospholipase A2 activity"/>
    <property type="evidence" value="ECO:0000314"/>
    <property type="project" value="MGI"/>
</dbReference>
<dbReference type="GO" id="GO:0004622">
    <property type="term" value="F:lysophospholipase activity"/>
    <property type="evidence" value="ECO:0000314"/>
    <property type="project" value="MGI"/>
</dbReference>
<dbReference type="GO" id="GO:0004623">
    <property type="term" value="F:phospholipase A2 activity"/>
    <property type="evidence" value="ECO:0000314"/>
    <property type="project" value="MGI"/>
</dbReference>
<dbReference type="GO" id="GO:0050482">
    <property type="term" value="P:arachidonate secretion"/>
    <property type="evidence" value="ECO:0000314"/>
    <property type="project" value="MGI"/>
</dbReference>
<dbReference type="GO" id="GO:0071236">
    <property type="term" value="P:cellular response to antibiotic"/>
    <property type="evidence" value="ECO:0000314"/>
    <property type="project" value="MGI"/>
</dbReference>
<dbReference type="GO" id="GO:0015908">
    <property type="term" value="P:fatty acid transport"/>
    <property type="evidence" value="ECO:0000314"/>
    <property type="project" value="MGI"/>
</dbReference>
<dbReference type="GO" id="GO:0009395">
    <property type="term" value="P:phospholipid catabolic process"/>
    <property type="evidence" value="ECO:0007669"/>
    <property type="project" value="UniProtKB-KW"/>
</dbReference>
<dbReference type="GO" id="GO:0001516">
    <property type="term" value="P:prostaglandin biosynthetic process"/>
    <property type="evidence" value="ECO:0000314"/>
    <property type="project" value="MGI"/>
</dbReference>
<dbReference type="CDD" id="cd04036">
    <property type="entry name" value="C2_cPLA2"/>
    <property type="match status" value="1"/>
</dbReference>
<dbReference type="FunFam" id="2.60.40.150:FF:000030">
    <property type="entry name" value="Phospholipase A2"/>
    <property type="match status" value="1"/>
</dbReference>
<dbReference type="FunFam" id="3.40.1090.10:FF:000002">
    <property type="entry name" value="Phospholipase A2"/>
    <property type="match status" value="1"/>
</dbReference>
<dbReference type="Gene3D" id="2.60.40.150">
    <property type="entry name" value="C2 domain"/>
    <property type="match status" value="1"/>
</dbReference>
<dbReference type="Gene3D" id="3.40.1090.10">
    <property type="entry name" value="Cytosolic phospholipase A2 catalytic domain"/>
    <property type="match status" value="1"/>
</dbReference>
<dbReference type="InterPro" id="IPR016035">
    <property type="entry name" value="Acyl_Trfase/lysoPLipase"/>
</dbReference>
<dbReference type="InterPro" id="IPR041847">
    <property type="entry name" value="C2_cPLA2"/>
</dbReference>
<dbReference type="InterPro" id="IPR000008">
    <property type="entry name" value="C2_dom"/>
</dbReference>
<dbReference type="InterPro" id="IPR035892">
    <property type="entry name" value="C2_domain_sf"/>
</dbReference>
<dbReference type="InterPro" id="IPR040723">
    <property type="entry name" value="cPLA2_C2"/>
</dbReference>
<dbReference type="InterPro" id="IPR002642">
    <property type="entry name" value="LysoPLipase_cat_dom"/>
</dbReference>
<dbReference type="PANTHER" id="PTHR10728">
    <property type="entry name" value="CYTOSOLIC PHOSPHOLIPASE A2"/>
    <property type="match status" value="1"/>
</dbReference>
<dbReference type="PANTHER" id="PTHR10728:SF22">
    <property type="entry name" value="CYTOSOLIC PHOSPHOLIPASE A2 ZETA"/>
    <property type="match status" value="1"/>
</dbReference>
<dbReference type="Pfam" id="PF00168">
    <property type="entry name" value="C2"/>
    <property type="match status" value="1"/>
</dbReference>
<dbReference type="Pfam" id="PF18695">
    <property type="entry name" value="cPLA2_C2"/>
    <property type="match status" value="1"/>
</dbReference>
<dbReference type="Pfam" id="PF01735">
    <property type="entry name" value="PLA2_B"/>
    <property type="match status" value="1"/>
</dbReference>
<dbReference type="SMART" id="SM00239">
    <property type="entry name" value="C2"/>
    <property type="match status" value="1"/>
</dbReference>
<dbReference type="SMART" id="SM00022">
    <property type="entry name" value="PLAc"/>
    <property type="match status" value="1"/>
</dbReference>
<dbReference type="SUPFAM" id="SSF49562">
    <property type="entry name" value="C2 domain (Calcium/lipid-binding domain, CaLB)"/>
    <property type="match status" value="1"/>
</dbReference>
<dbReference type="SUPFAM" id="SSF52151">
    <property type="entry name" value="FabD/lysophospholipase-like"/>
    <property type="match status" value="1"/>
</dbReference>
<dbReference type="PROSITE" id="PS50004">
    <property type="entry name" value="C2"/>
    <property type="match status" value="1"/>
</dbReference>
<dbReference type="PROSITE" id="PS51210">
    <property type="entry name" value="PLA2C"/>
    <property type="match status" value="1"/>
</dbReference>
<evidence type="ECO:0000250" key="1"/>
<evidence type="ECO:0000250" key="2">
    <source>
        <dbReference type="UniProtKB" id="Q68DD2"/>
    </source>
</evidence>
<evidence type="ECO:0000255" key="3">
    <source>
        <dbReference type="PROSITE-ProRule" id="PRU00041"/>
    </source>
</evidence>
<evidence type="ECO:0000255" key="4">
    <source>
        <dbReference type="PROSITE-ProRule" id="PRU00555"/>
    </source>
</evidence>
<evidence type="ECO:0000269" key="5">
    <source>
    </source>
</evidence>
<evidence type="ECO:0000269" key="6">
    <source>
    </source>
</evidence>
<evidence type="ECO:0000305" key="7"/>
<evidence type="ECO:0000305" key="8">
    <source>
    </source>
</evidence>
<evidence type="ECO:0000305" key="9">
    <source>
    </source>
</evidence>
<gene>
    <name type="primary">Pla2g4f</name>
</gene>
<keyword id="KW-0106">Calcium</keyword>
<keyword id="KW-1003">Cell membrane</keyword>
<keyword id="KW-0963">Cytoplasm</keyword>
<keyword id="KW-0378">Hydrolase</keyword>
<keyword id="KW-0442">Lipid degradation</keyword>
<keyword id="KW-0443">Lipid metabolism</keyword>
<keyword id="KW-0472">Membrane</keyword>
<keyword id="KW-0479">Metal-binding</keyword>
<keyword id="KW-0496">Mitochondrion</keyword>
<keyword id="KW-0595">Phospholipid degradation</keyword>
<keyword id="KW-1208">Phospholipid metabolism</keyword>
<keyword id="KW-1185">Reference proteome</keyword>
<accession>Q50L41</accession>
<accession>A2AQJ2</accession>
<accession>Q80VQ8</accession>
<accession>Q80VV9</accession>
<sequence length="855" mass="96364">MPWTLQPKWLAGKGLPLLGAILLRKTEKSEPQWKHRRQETHPYYDLQVKVLRARNIQHTDKLSKADCYVRLWLPTASVSPSQTRTVVNSSDPEWNETFPYQIHGAVKNVLELALYDEDVLDSDNVFSILFDTSTLQLGQPCTKNFTRQQDPKELEVEFTLEKSQTPASEVVTNGVLVAHPCLRIQGTVTGDKTASLGELGSRQIQLAVPGAYEKPQPLQPTSEPGLPVNFTFHVNPVLSPKLHIKLQEQLQVFHSGPSDELEAQTSKMDKASILLSSLPLNEELTKLVDLEEGQQVSLRMKADMSSSGDLDLRLGFDLCDGEQEFLDKRKQVASKALQRVMGLSEALHCDQVPVVAVLGSGGGTRAMTSLYGSLAGLQELGLLDAVTYLSGVSGSSWCISTLYRDPSWSQKALQGPIKYASERVCSSKIGMLSPKQFEYYSREKRAWESRGHSMSFTDLWGLIIEYFLNQEENPAKLSDQQETVSQGQNPYPIYASINVHKNISGDDFAEWCEFTPYEVGFPKYGAYVPTELFGSEFFMGRLLHFWPEPRICYLQGMWGSAFAASLYEIFLKLGGLSLSFLDWHRGSVSVTDDWPKLRKQDPTRLPTRLFTPMSSFSQAVLDIFTSRITCAQTFNFTRGLCMYKDYTARKDFVVSEDAWHSHNYGYPDACPNQLTPMKDFLSLVDGGFAINSPFPLVLQPQRAVDLIVSFDYSLEGPFEVLQVTEKYCRDRGIPFPRIEVDPKDSEDPRECYLFAEAEDPCSPIVLHFPLVNRTFRTHLAPGVERQTAEEKAFGDFIINGPDTAYGMMDFTYEPKEFDRLVTLSRYNVLNNKETIRHALQLALDRRRQAGGRVGG</sequence>
<reference key="1">
    <citation type="journal article" date="2005" name="J. Biol. Chem.">
        <title>Identification of novel cytosolic phospholipase A(2)s, murine cPLA(2)delta, epsilon, and zeta, which form a gene cluster with cPLA(2)beta.</title>
        <authorList>
            <person name="Ohto T."/>
            <person name="Uozumi N."/>
            <person name="Hirabayashi T."/>
            <person name="Shimizu T."/>
        </authorList>
    </citation>
    <scope>NUCLEOTIDE SEQUENCE [MRNA]</scope>
    <scope>FUNCTION</scope>
    <scope>CATALYTIC ACTIVITY</scope>
    <scope>COFACTOR</scope>
    <scope>ACTIVITY REGULATION</scope>
    <scope>SUBCELLULAR LOCATION</scope>
    <scope>TISSUE SPECIFICITY</scope>
    <source>
        <strain>C57BL/6J</strain>
    </source>
</reference>
<reference key="2">
    <citation type="journal article" date="2009" name="PLoS Biol.">
        <title>Lineage-specific biology revealed by a finished genome assembly of the mouse.</title>
        <authorList>
            <person name="Church D.M."/>
            <person name="Goodstadt L."/>
            <person name="Hillier L.W."/>
            <person name="Zody M.C."/>
            <person name="Goldstein S."/>
            <person name="She X."/>
            <person name="Bult C.J."/>
            <person name="Agarwala R."/>
            <person name="Cherry J.L."/>
            <person name="DiCuccio M."/>
            <person name="Hlavina W."/>
            <person name="Kapustin Y."/>
            <person name="Meric P."/>
            <person name="Maglott D."/>
            <person name="Birtle Z."/>
            <person name="Marques A.C."/>
            <person name="Graves T."/>
            <person name="Zhou S."/>
            <person name="Teague B."/>
            <person name="Potamousis K."/>
            <person name="Churas C."/>
            <person name="Place M."/>
            <person name="Herschleb J."/>
            <person name="Runnheim R."/>
            <person name="Forrest D."/>
            <person name="Amos-Landgraf J."/>
            <person name="Schwartz D.C."/>
            <person name="Cheng Z."/>
            <person name="Lindblad-Toh K."/>
            <person name="Eichler E.E."/>
            <person name="Ponting C.P."/>
        </authorList>
    </citation>
    <scope>NUCLEOTIDE SEQUENCE [LARGE SCALE GENOMIC DNA]</scope>
    <source>
        <strain>C57BL/6J</strain>
    </source>
</reference>
<reference key="3">
    <citation type="journal article" date="2004" name="Genome Res.">
        <title>The status, quality, and expansion of the NIH full-length cDNA project: the Mammalian Gene Collection (MGC).</title>
        <authorList>
            <consortium name="The MGC Project Team"/>
        </authorList>
    </citation>
    <scope>NUCLEOTIDE SEQUENCE [LARGE SCALE MRNA] OF 19-855</scope>
    <source>
        <strain>FVB/N</strain>
        <strain>NMRI</strain>
        <tissue>Mammary tumor</tissue>
        <tissue>Salivary gland</tissue>
    </source>
</reference>
<reference key="4">
    <citation type="journal article" date="2007" name="J. Biol. Chem.">
        <title>Function, activity, and membrane targeting of cytosolic phospholipase A(2)zeta in mouse lung fibroblasts.</title>
        <authorList>
            <person name="Ghosh M."/>
            <person name="Loper R."/>
            <person name="Ghomashchi F."/>
            <person name="Tucker D.E."/>
            <person name="Bonventre J.V."/>
            <person name="Gelb M.H."/>
            <person name="Leslie C.C."/>
        </authorList>
    </citation>
    <scope>FUNCTION</scope>
    <scope>CATALYTIC ACTIVITY</scope>
    <scope>ACTIVITY REGULATION</scope>
    <scope>COFACTOR</scope>
    <scope>SUBCELLULAR LOCATION</scope>
</reference>
<protein>
    <recommendedName>
        <fullName>Cytosolic phospholipase A2 zeta</fullName>
        <shortName>cPLA2-zeta</shortName>
        <ecNumber evidence="5 6">3.1.1.4</ecNumber>
    </recommendedName>
    <alternativeName>
        <fullName>Phospholipase A2 group IVF</fullName>
    </alternativeName>
</protein>
<comment type="function">
    <text evidence="2 5 6">Has calcium-dependent phospholipase and lysophospholipase activities with a potential role in membrane lipid remodeling and biosynthesis of lipid mediators (PubMed:15866882, PubMed:17293613). Preferentially hydrolyzes the ester bond of the fatty acyl group attached at sn-2 position of phospholipids (phospholipase A2 activity) (PubMed:15866882, PubMed:17293613). Selectively hydrolyzes sn-2 arachidonoyl group from membrane phospholipids, providing the precursor for eicosanoid biosynthesis (PubMed:15866882, PubMed:17293613). In myocardial mitochondria, plays a major role in arachidonate release that is metabolically channeled to the formation of cardioprotective eicosanoids, epoxyeicosatrienoates (EETs) (By similarity).</text>
</comment>
<comment type="catalytic activity">
    <reaction evidence="5 6">
        <text>a 1,2-diacyl-sn-glycero-3-phosphocholine + H2O = a 1-acyl-sn-glycero-3-phosphocholine + a fatty acid + H(+)</text>
        <dbReference type="Rhea" id="RHEA:15801"/>
        <dbReference type="ChEBI" id="CHEBI:15377"/>
        <dbReference type="ChEBI" id="CHEBI:15378"/>
        <dbReference type="ChEBI" id="CHEBI:28868"/>
        <dbReference type="ChEBI" id="CHEBI:57643"/>
        <dbReference type="ChEBI" id="CHEBI:58168"/>
        <dbReference type="EC" id="3.1.1.4"/>
    </reaction>
    <physiologicalReaction direction="left-to-right" evidence="8 9">
        <dbReference type="Rhea" id="RHEA:15802"/>
    </physiologicalReaction>
</comment>
<comment type="catalytic activity">
    <reaction evidence="6">
        <text>a 1-O-alkyl-2-acyl-sn-glycero-3-phosphocholine + H2O = a 1-O-alkyl-sn-glycero-3-phosphocholine + a fatty acid + H(+)</text>
        <dbReference type="Rhea" id="RHEA:36231"/>
        <dbReference type="ChEBI" id="CHEBI:15377"/>
        <dbReference type="ChEBI" id="CHEBI:15378"/>
        <dbReference type="ChEBI" id="CHEBI:28868"/>
        <dbReference type="ChEBI" id="CHEBI:30909"/>
        <dbReference type="ChEBI" id="CHEBI:36702"/>
        <dbReference type="EC" id="3.1.1.4"/>
    </reaction>
    <physiologicalReaction direction="left-to-right" evidence="9">
        <dbReference type="Rhea" id="RHEA:36232"/>
    </physiologicalReaction>
</comment>
<comment type="catalytic activity">
    <reaction evidence="6">
        <text>1-hexadecanoyl-2-(9Z-octadecenoyl)-sn-glycero-3-phosphocholine + H2O = 2-(9Z-octadecenoyl)-sn-glycero-3-phosphocholine + hexadecanoate + H(+)</text>
        <dbReference type="Rhea" id="RHEA:38783"/>
        <dbReference type="ChEBI" id="CHEBI:7896"/>
        <dbReference type="ChEBI" id="CHEBI:15377"/>
        <dbReference type="ChEBI" id="CHEBI:15378"/>
        <dbReference type="ChEBI" id="CHEBI:73001"/>
        <dbReference type="ChEBI" id="CHEBI:76071"/>
    </reaction>
    <physiologicalReaction direction="left-to-right" evidence="9">
        <dbReference type="Rhea" id="RHEA:38784"/>
    </physiologicalReaction>
</comment>
<comment type="catalytic activity">
    <reaction evidence="5">
        <text>1-hexadecanoyl-2-(9Z,12Z-octadecadienoyl)-sn-glycero-3-phosphocholine + H2O = (9Z,12Z)-octadecadienoate + 1-hexadecanoyl-sn-glycero-3-phosphocholine + H(+)</text>
        <dbReference type="Rhea" id="RHEA:40811"/>
        <dbReference type="ChEBI" id="CHEBI:15377"/>
        <dbReference type="ChEBI" id="CHEBI:15378"/>
        <dbReference type="ChEBI" id="CHEBI:30245"/>
        <dbReference type="ChEBI" id="CHEBI:72998"/>
        <dbReference type="ChEBI" id="CHEBI:73002"/>
    </reaction>
    <physiologicalReaction direction="left-to-right" evidence="8">
        <dbReference type="Rhea" id="RHEA:40812"/>
    </physiologicalReaction>
</comment>
<comment type="catalytic activity">
    <reaction evidence="5 6">
        <text>1-hexadecanoyl-2-(5Z,8Z,11Z,14Z-eicosatetraenoyl)-sn-glycero-3-phosphocholine + H2O = 1-hexadecanoyl-sn-glycero-3-phosphocholine + (5Z,8Z,11Z,14Z)-eicosatetraenoate + H(+)</text>
        <dbReference type="Rhea" id="RHEA:40427"/>
        <dbReference type="ChEBI" id="CHEBI:15377"/>
        <dbReference type="ChEBI" id="CHEBI:15378"/>
        <dbReference type="ChEBI" id="CHEBI:32395"/>
        <dbReference type="ChEBI" id="CHEBI:72998"/>
        <dbReference type="ChEBI" id="CHEBI:73003"/>
    </reaction>
    <physiologicalReaction direction="left-to-right" evidence="9">
        <dbReference type="Rhea" id="RHEA:40428"/>
    </physiologicalReaction>
</comment>
<comment type="catalytic activity">
    <reaction evidence="5 6">
        <text>1-hexadecanoyl-2-(9Z,12Z-octadecadienoyl)-sn-glycero-3-phosphoethanolamine + H2O = 1-hexadecanoyl-sn-glycero-3-phosphoethanolamine + (9Z,12Z)-octadecadienoate + H(+)</text>
        <dbReference type="Rhea" id="RHEA:40815"/>
        <dbReference type="ChEBI" id="CHEBI:15377"/>
        <dbReference type="ChEBI" id="CHEBI:15378"/>
        <dbReference type="ChEBI" id="CHEBI:30245"/>
        <dbReference type="ChEBI" id="CHEBI:73004"/>
        <dbReference type="ChEBI" id="CHEBI:73008"/>
    </reaction>
    <physiologicalReaction direction="left-to-right" evidence="8 9">
        <dbReference type="Rhea" id="RHEA:40816"/>
    </physiologicalReaction>
</comment>
<comment type="catalytic activity">
    <reaction evidence="5 6">
        <text>1-hexadecanoyl-2-(5Z,8Z,11Z,14Z-eicosatetraenoyl)-sn-glycero-3-phosphoethanolamine + H2O = 1-hexadecanoyl-sn-glycero-3-phosphoethanolamine + (5Z,8Z,11Z,14Z)-eicosatetraenoate + H(+)</text>
        <dbReference type="Rhea" id="RHEA:40431"/>
        <dbReference type="ChEBI" id="CHEBI:15377"/>
        <dbReference type="ChEBI" id="CHEBI:15378"/>
        <dbReference type="ChEBI" id="CHEBI:32395"/>
        <dbReference type="ChEBI" id="CHEBI:73004"/>
        <dbReference type="ChEBI" id="CHEBI:73009"/>
    </reaction>
    <physiologicalReaction direction="left-to-right" evidence="8 9">
        <dbReference type="Rhea" id="RHEA:40432"/>
    </physiologicalReaction>
</comment>
<comment type="catalytic activity">
    <reaction evidence="6">
        <text>1-(5Z,8Z,11Z,14Z-eicosatetraenoyl)-2-O-hexadecyl-sn-glycero-3-phosphocholine + H2O = 2-O-hexadecyl-sn-glycero-3-phosphocholine + (5Z,8Z,11Z,14Z)-eicosatetraenoate + H(+)</text>
        <dbReference type="Rhea" id="RHEA:41271"/>
        <dbReference type="ChEBI" id="CHEBI:15377"/>
        <dbReference type="ChEBI" id="CHEBI:15378"/>
        <dbReference type="ChEBI" id="CHEBI:32395"/>
        <dbReference type="ChEBI" id="CHEBI:77695"/>
        <dbReference type="ChEBI" id="CHEBI:77696"/>
    </reaction>
    <physiologicalReaction direction="left-to-right" evidence="9">
        <dbReference type="Rhea" id="RHEA:41272"/>
    </physiologicalReaction>
</comment>
<comment type="catalytic activity">
    <reaction evidence="6">
        <text>1-O-hexadecyl-2-(5Z,8Z,11Z,14Z)-eicosatetraenoyl-sn-glycero-3-phosphocholine + H2O = 1-O-hexadecyl-sn-glycero-3-phosphocholine + (5Z,8Z,11Z,14Z)-eicosatetraenoate + H(+)</text>
        <dbReference type="Rhea" id="RHEA:41067"/>
        <dbReference type="ChEBI" id="CHEBI:15377"/>
        <dbReference type="ChEBI" id="CHEBI:15378"/>
        <dbReference type="ChEBI" id="CHEBI:32395"/>
        <dbReference type="ChEBI" id="CHEBI:55430"/>
        <dbReference type="ChEBI" id="CHEBI:64496"/>
    </reaction>
    <physiologicalReaction direction="left-to-right" evidence="9">
        <dbReference type="Rhea" id="RHEA:41068"/>
    </physiologicalReaction>
</comment>
<comment type="catalytic activity">
    <reaction evidence="6">
        <text>1-hexadecanoyl-sn-glycero-3-phosphocholine + H2O = sn-glycerol 3-phosphocholine + hexadecanoate + H(+)</text>
        <dbReference type="Rhea" id="RHEA:40435"/>
        <dbReference type="ChEBI" id="CHEBI:7896"/>
        <dbReference type="ChEBI" id="CHEBI:15377"/>
        <dbReference type="ChEBI" id="CHEBI:15378"/>
        <dbReference type="ChEBI" id="CHEBI:16870"/>
        <dbReference type="ChEBI" id="CHEBI:72998"/>
    </reaction>
    <physiologicalReaction direction="left-to-right" evidence="9">
        <dbReference type="Rhea" id="RHEA:40436"/>
    </physiologicalReaction>
</comment>
<comment type="cofactor">
    <cofactor evidence="3 5 6">
        <name>Ca(2+)</name>
        <dbReference type="ChEBI" id="CHEBI:29108"/>
    </cofactor>
</comment>
<comment type="activity regulation">
    <text evidence="5 6">Stimulated by cytosolic Ca(2+).</text>
</comment>
<comment type="subcellular location">
    <subcellularLocation>
        <location evidence="5 6">Cytoplasm</location>
        <location evidence="5 6">Cytosol</location>
    </subcellularLocation>
    <subcellularLocation>
        <location evidence="6">Cell membrane</location>
        <topology evidence="7">Peripheral membrane protein</topology>
    </subcellularLocation>
    <subcellularLocation>
        <location evidence="2">Mitochondrion</location>
    </subcellularLocation>
</comment>
<comment type="tissue specificity">
    <text evidence="5">Strongly expressed in thyroid, expressed at intermediate level in stomach and at very low level in large intestine and prostate.</text>
</comment>
<comment type="domain">
    <text evidence="1">The N-terminal C2 domain associates with lipid membranes upon calcium binding. It modulates enzyme activity by presenting the active site to its substrate in response to elevations of cytosolic Ca(2+) (By similarity).</text>
</comment>
<comment type="sequence caution" evidence="7">
    <conflict type="erroneous initiation">
        <sequence resource="EMBL-CDS" id="AAH39947"/>
    </conflict>
    <text>Extended N-terminus.</text>
</comment>
<name>PA24F_MOUSE</name>
<organism>
    <name type="scientific">Mus musculus</name>
    <name type="common">Mouse</name>
    <dbReference type="NCBI Taxonomy" id="10090"/>
    <lineage>
        <taxon>Eukaryota</taxon>
        <taxon>Metazoa</taxon>
        <taxon>Chordata</taxon>
        <taxon>Craniata</taxon>
        <taxon>Vertebrata</taxon>
        <taxon>Euteleostomi</taxon>
        <taxon>Mammalia</taxon>
        <taxon>Eutheria</taxon>
        <taxon>Euarchontoglires</taxon>
        <taxon>Glires</taxon>
        <taxon>Rodentia</taxon>
        <taxon>Myomorpha</taxon>
        <taxon>Muroidea</taxon>
        <taxon>Muridae</taxon>
        <taxon>Murinae</taxon>
        <taxon>Mus</taxon>
        <taxon>Mus</taxon>
    </lineage>
</organism>